<organism>
    <name type="scientific">Rippkaea orientalis (strain PCC 8801 / RF-1)</name>
    <name type="common">Cyanothece sp. (strain PCC 8801)</name>
    <dbReference type="NCBI Taxonomy" id="41431"/>
    <lineage>
        <taxon>Bacteria</taxon>
        <taxon>Bacillati</taxon>
        <taxon>Cyanobacteriota</taxon>
        <taxon>Cyanophyceae</taxon>
        <taxon>Oscillatoriophycideae</taxon>
        <taxon>Chroococcales</taxon>
        <taxon>Aphanothecaceae</taxon>
        <taxon>Rippkaea</taxon>
        <taxon>Rippkaea orientalis</taxon>
    </lineage>
</organism>
<protein>
    <recommendedName>
        <fullName evidence="1">GTPase Era</fullName>
    </recommendedName>
</protein>
<comment type="function">
    <text evidence="1">An essential GTPase that binds both GDP and GTP, with rapid nucleotide exchange. Plays a role in 16S rRNA processing and 30S ribosomal subunit biogenesis and possibly also in cell cycle regulation and energy metabolism.</text>
</comment>
<comment type="subunit">
    <text evidence="1">Monomer.</text>
</comment>
<comment type="subcellular location">
    <subcellularLocation>
        <location>Cytoplasm</location>
    </subcellularLocation>
    <subcellularLocation>
        <location evidence="1">Cell inner membrane</location>
        <topology evidence="1">Peripheral membrane protein</topology>
    </subcellularLocation>
</comment>
<comment type="similarity">
    <text evidence="1 2">Belongs to the TRAFAC class TrmE-Era-EngA-EngB-Septin-like GTPase superfamily. Era GTPase family.</text>
</comment>
<proteinExistence type="inferred from homology"/>
<gene>
    <name evidence="1" type="primary">era</name>
    <name type="ordered locus">PCC8801_2546</name>
</gene>
<feature type="chain" id="PRO_1000121316" description="GTPase Era">
    <location>
        <begin position="1"/>
        <end position="314"/>
    </location>
</feature>
<feature type="domain" description="Era-type G" evidence="2">
    <location>
        <begin position="21"/>
        <end position="189"/>
    </location>
</feature>
<feature type="domain" description="KH type-2" evidence="1">
    <location>
        <begin position="212"/>
        <end position="296"/>
    </location>
</feature>
<feature type="region of interest" description="G1" evidence="2">
    <location>
        <begin position="29"/>
        <end position="36"/>
    </location>
</feature>
<feature type="region of interest" description="G2" evidence="2">
    <location>
        <begin position="55"/>
        <end position="59"/>
    </location>
</feature>
<feature type="region of interest" description="G3" evidence="2">
    <location>
        <begin position="76"/>
        <end position="79"/>
    </location>
</feature>
<feature type="region of interest" description="G4" evidence="2">
    <location>
        <begin position="138"/>
        <end position="141"/>
    </location>
</feature>
<feature type="region of interest" description="G5" evidence="2">
    <location>
        <begin position="168"/>
        <end position="170"/>
    </location>
</feature>
<feature type="binding site" evidence="1">
    <location>
        <begin position="29"/>
        <end position="36"/>
    </location>
    <ligand>
        <name>GTP</name>
        <dbReference type="ChEBI" id="CHEBI:37565"/>
    </ligand>
</feature>
<feature type="binding site" evidence="1">
    <location>
        <begin position="76"/>
        <end position="80"/>
    </location>
    <ligand>
        <name>GTP</name>
        <dbReference type="ChEBI" id="CHEBI:37565"/>
    </ligand>
</feature>
<feature type="binding site" evidence="1">
    <location>
        <begin position="138"/>
        <end position="141"/>
    </location>
    <ligand>
        <name>GTP</name>
        <dbReference type="ChEBI" id="CHEBI:37565"/>
    </ligand>
</feature>
<name>ERA_RIPO1</name>
<accession>B7K414</accession>
<dbReference type="EMBL" id="CP001287">
    <property type="protein sequence ID" value="ACK66554.1"/>
    <property type="molecule type" value="Genomic_DNA"/>
</dbReference>
<dbReference type="RefSeq" id="WP_012595821.1">
    <property type="nucleotide sequence ID" value="NC_011726.1"/>
</dbReference>
<dbReference type="SMR" id="B7K414"/>
<dbReference type="STRING" id="41431.PCC8801_2546"/>
<dbReference type="KEGG" id="cyp:PCC8801_2546"/>
<dbReference type="eggNOG" id="COG1159">
    <property type="taxonomic scope" value="Bacteria"/>
</dbReference>
<dbReference type="HOGENOM" id="CLU_038009_1_0_3"/>
<dbReference type="OrthoDB" id="9805918at2"/>
<dbReference type="Proteomes" id="UP000008204">
    <property type="component" value="Chromosome"/>
</dbReference>
<dbReference type="GO" id="GO:0005829">
    <property type="term" value="C:cytosol"/>
    <property type="evidence" value="ECO:0007669"/>
    <property type="project" value="TreeGrafter"/>
</dbReference>
<dbReference type="GO" id="GO:0005886">
    <property type="term" value="C:plasma membrane"/>
    <property type="evidence" value="ECO:0007669"/>
    <property type="project" value="UniProtKB-SubCell"/>
</dbReference>
<dbReference type="GO" id="GO:0005525">
    <property type="term" value="F:GTP binding"/>
    <property type="evidence" value="ECO:0007669"/>
    <property type="project" value="UniProtKB-UniRule"/>
</dbReference>
<dbReference type="GO" id="GO:0003924">
    <property type="term" value="F:GTPase activity"/>
    <property type="evidence" value="ECO:0007669"/>
    <property type="project" value="UniProtKB-UniRule"/>
</dbReference>
<dbReference type="GO" id="GO:0043024">
    <property type="term" value="F:ribosomal small subunit binding"/>
    <property type="evidence" value="ECO:0007669"/>
    <property type="project" value="TreeGrafter"/>
</dbReference>
<dbReference type="GO" id="GO:0070181">
    <property type="term" value="F:small ribosomal subunit rRNA binding"/>
    <property type="evidence" value="ECO:0007669"/>
    <property type="project" value="UniProtKB-UniRule"/>
</dbReference>
<dbReference type="GO" id="GO:0000028">
    <property type="term" value="P:ribosomal small subunit assembly"/>
    <property type="evidence" value="ECO:0007669"/>
    <property type="project" value="TreeGrafter"/>
</dbReference>
<dbReference type="CDD" id="cd04163">
    <property type="entry name" value="Era"/>
    <property type="match status" value="1"/>
</dbReference>
<dbReference type="CDD" id="cd22534">
    <property type="entry name" value="KH-II_Era"/>
    <property type="match status" value="1"/>
</dbReference>
<dbReference type="FunFam" id="3.30.300.20:FF:000003">
    <property type="entry name" value="GTPase Era"/>
    <property type="match status" value="1"/>
</dbReference>
<dbReference type="Gene3D" id="3.30.300.20">
    <property type="match status" value="1"/>
</dbReference>
<dbReference type="Gene3D" id="3.40.50.300">
    <property type="entry name" value="P-loop containing nucleotide triphosphate hydrolases"/>
    <property type="match status" value="1"/>
</dbReference>
<dbReference type="HAMAP" id="MF_00367">
    <property type="entry name" value="GTPase_Era"/>
    <property type="match status" value="1"/>
</dbReference>
<dbReference type="InterPro" id="IPR030388">
    <property type="entry name" value="G_ERA_dom"/>
</dbReference>
<dbReference type="InterPro" id="IPR006073">
    <property type="entry name" value="GTP-bd"/>
</dbReference>
<dbReference type="InterPro" id="IPR005662">
    <property type="entry name" value="GTPase_Era-like"/>
</dbReference>
<dbReference type="InterPro" id="IPR015946">
    <property type="entry name" value="KH_dom-like_a/b"/>
</dbReference>
<dbReference type="InterPro" id="IPR004044">
    <property type="entry name" value="KH_dom_type_2"/>
</dbReference>
<dbReference type="InterPro" id="IPR009019">
    <property type="entry name" value="KH_sf_prok-type"/>
</dbReference>
<dbReference type="InterPro" id="IPR027417">
    <property type="entry name" value="P-loop_NTPase"/>
</dbReference>
<dbReference type="InterPro" id="IPR005225">
    <property type="entry name" value="Small_GTP-bd"/>
</dbReference>
<dbReference type="NCBIfam" id="TIGR00436">
    <property type="entry name" value="era"/>
    <property type="match status" value="1"/>
</dbReference>
<dbReference type="NCBIfam" id="NF000908">
    <property type="entry name" value="PRK00089.1"/>
    <property type="match status" value="1"/>
</dbReference>
<dbReference type="NCBIfam" id="TIGR00231">
    <property type="entry name" value="small_GTP"/>
    <property type="match status" value="1"/>
</dbReference>
<dbReference type="PANTHER" id="PTHR42698">
    <property type="entry name" value="GTPASE ERA"/>
    <property type="match status" value="1"/>
</dbReference>
<dbReference type="PANTHER" id="PTHR42698:SF1">
    <property type="entry name" value="GTPASE ERA, MITOCHONDRIAL"/>
    <property type="match status" value="1"/>
</dbReference>
<dbReference type="Pfam" id="PF07650">
    <property type="entry name" value="KH_2"/>
    <property type="match status" value="1"/>
</dbReference>
<dbReference type="Pfam" id="PF01926">
    <property type="entry name" value="MMR_HSR1"/>
    <property type="match status" value="1"/>
</dbReference>
<dbReference type="PRINTS" id="PR00326">
    <property type="entry name" value="GTP1OBG"/>
</dbReference>
<dbReference type="SUPFAM" id="SSF52540">
    <property type="entry name" value="P-loop containing nucleoside triphosphate hydrolases"/>
    <property type="match status" value="1"/>
</dbReference>
<dbReference type="SUPFAM" id="SSF54814">
    <property type="entry name" value="Prokaryotic type KH domain (KH-domain type II)"/>
    <property type="match status" value="1"/>
</dbReference>
<dbReference type="PROSITE" id="PS51713">
    <property type="entry name" value="G_ERA"/>
    <property type="match status" value="1"/>
</dbReference>
<dbReference type="PROSITE" id="PS50823">
    <property type="entry name" value="KH_TYPE_2"/>
    <property type="match status" value="1"/>
</dbReference>
<keyword id="KW-0997">Cell inner membrane</keyword>
<keyword id="KW-1003">Cell membrane</keyword>
<keyword id="KW-0963">Cytoplasm</keyword>
<keyword id="KW-0342">GTP-binding</keyword>
<keyword id="KW-0472">Membrane</keyword>
<keyword id="KW-0547">Nucleotide-binding</keyword>
<keyword id="KW-1185">Reference proteome</keyword>
<keyword id="KW-0690">Ribosome biogenesis</keyword>
<keyword id="KW-0694">RNA-binding</keyword>
<keyword id="KW-0699">rRNA-binding</keyword>
<evidence type="ECO:0000255" key="1">
    <source>
        <dbReference type="HAMAP-Rule" id="MF_00367"/>
    </source>
</evidence>
<evidence type="ECO:0000255" key="2">
    <source>
        <dbReference type="PROSITE-ProRule" id="PRU01050"/>
    </source>
</evidence>
<sequence length="314" mass="34839">MTEQINQLSLSSIPIAPEGFKSGFVGIIGRPNVGKSTLMNQLVGQKIAITSPVSQTTRNRLRGILTTEEAQIIFVDTPGIHKPHHQLGKILVQNAEAAINAVDIILVVVDSSIEAGGGDRYIVELLENTETPVILGLNKSDQQPQNYQPIDESYLVLAQAHNWPVIKFSALTGEGLDNLQKTLINLLEPGPYYYPPDLVTDQPERFIMGELIREQILQQTRQEIPHSVAIVIEKVEETPTLTRVFAAINVERDSQKGIIIGKKGAMLKAIGTAAREQMQKLITGEVYLQLFVKVEPQWRQSSLRLSEFGYQIET</sequence>
<reference key="1">
    <citation type="journal article" date="2011" name="MBio">
        <title>Novel metabolic attributes of the genus Cyanothece, comprising a group of unicellular nitrogen-fixing Cyanobacteria.</title>
        <authorList>
            <person name="Bandyopadhyay A."/>
            <person name="Elvitigala T."/>
            <person name="Welsh E."/>
            <person name="Stockel J."/>
            <person name="Liberton M."/>
            <person name="Min H."/>
            <person name="Sherman L.A."/>
            <person name="Pakrasi H.B."/>
        </authorList>
    </citation>
    <scope>NUCLEOTIDE SEQUENCE [LARGE SCALE GENOMIC DNA]</scope>
    <source>
        <strain>PCC 8801 / RF-1</strain>
    </source>
</reference>